<organism>
    <name type="scientific">Herminiimonas arsenicoxydans</name>
    <dbReference type="NCBI Taxonomy" id="204773"/>
    <lineage>
        <taxon>Bacteria</taxon>
        <taxon>Pseudomonadati</taxon>
        <taxon>Pseudomonadota</taxon>
        <taxon>Betaproteobacteria</taxon>
        <taxon>Burkholderiales</taxon>
        <taxon>Oxalobacteraceae</taxon>
        <taxon>Herminiimonas</taxon>
    </lineage>
</organism>
<feature type="chain" id="PRO_1000045134" description="Aspartate/glutamate leucyltransferase">
    <location>
        <begin position="1"/>
        <end position="241"/>
    </location>
</feature>
<evidence type="ECO:0000255" key="1">
    <source>
        <dbReference type="HAMAP-Rule" id="MF_00689"/>
    </source>
</evidence>
<reference key="1">
    <citation type="journal article" date="2007" name="PLoS Genet.">
        <title>A tale of two oxidation states: bacterial colonization of arsenic-rich environments.</title>
        <authorList>
            <person name="Muller D."/>
            <person name="Medigue C."/>
            <person name="Koechler S."/>
            <person name="Barbe V."/>
            <person name="Barakat M."/>
            <person name="Talla E."/>
            <person name="Bonnefoy V."/>
            <person name="Krin E."/>
            <person name="Arsene-Ploetze F."/>
            <person name="Carapito C."/>
            <person name="Chandler M."/>
            <person name="Cournoyer B."/>
            <person name="Cruveiller S."/>
            <person name="Dossat C."/>
            <person name="Duval S."/>
            <person name="Heymann M."/>
            <person name="Leize E."/>
            <person name="Lieutaud A."/>
            <person name="Lievremont D."/>
            <person name="Makita Y."/>
            <person name="Mangenot S."/>
            <person name="Nitschke W."/>
            <person name="Ortet P."/>
            <person name="Perdrial N."/>
            <person name="Schoepp B."/>
            <person name="Siguier P."/>
            <person name="Simeonova D.D."/>
            <person name="Rouy Z."/>
            <person name="Segurens B."/>
            <person name="Turlin E."/>
            <person name="Vallenet D."/>
            <person name="van Dorsselaer A."/>
            <person name="Weiss S."/>
            <person name="Weissenbach J."/>
            <person name="Lett M.-C."/>
            <person name="Danchin A."/>
            <person name="Bertin P.N."/>
        </authorList>
    </citation>
    <scope>NUCLEOTIDE SEQUENCE [LARGE SCALE GENOMIC DNA]</scope>
    <source>
        <strain>ULPAs1</strain>
    </source>
</reference>
<keyword id="KW-0012">Acyltransferase</keyword>
<keyword id="KW-0963">Cytoplasm</keyword>
<keyword id="KW-1185">Reference proteome</keyword>
<keyword id="KW-0808">Transferase</keyword>
<sequence>MTHPKELPFSTLQFYATAPYPCSYLDDRQARSQVATPAHLINADVYSELVKNGFRRSGIFTYRPHCDGCEACTPVRIVVDQFIPNRSQRRAQSRHSDLQTSVTKLVYLAEHYDLYLRYQAARHAGGGMDQDSREQYAQFLLQSKVNTRLVEFREDDGTLRMVSIIDVLDDGLSSVYTFYDPDEANSSYGTYNVLWQIEQARMLQIPYVYLGYWIEESPKMSYKKNFQPLEALRRGEWQVLP</sequence>
<name>BPT_HERAR</name>
<proteinExistence type="inferred from homology"/>
<dbReference type="EC" id="2.3.2.29" evidence="1"/>
<dbReference type="EMBL" id="CU207211">
    <property type="protein sequence ID" value="CAL62573.1"/>
    <property type="molecule type" value="Genomic_DNA"/>
</dbReference>
<dbReference type="SMR" id="A4G7T6"/>
<dbReference type="STRING" id="204773.HEAR2443"/>
<dbReference type="KEGG" id="har:HEAR2443"/>
<dbReference type="eggNOG" id="COG2935">
    <property type="taxonomic scope" value="Bacteria"/>
</dbReference>
<dbReference type="HOGENOM" id="CLU_077607_0_0_4"/>
<dbReference type="OrthoDB" id="9782022at2"/>
<dbReference type="Proteomes" id="UP000006697">
    <property type="component" value="Chromosome"/>
</dbReference>
<dbReference type="GO" id="GO:0005737">
    <property type="term" value="C:cytoplasm"/>
    <property type="evidence" value="ECO:0007669"/>
    <property type="project" value="UniProtKB-SubCell"/>
</dbReference>
<dbReference type="GO" id="GO:0004057">
    <property type="term" value="F:arginyl-tRNA--protein transferase activity"/>
    <property type="evidence" value="ECO:0007669"/>
    <property type="project" value="InterPro"/>
</dbReference>
<dbReference type="GO" id="GO:0008914">
    <property type="term" value="F:leucyl-tRNA--protein transferase activity"/>
    <property type="evidence" value="ECO:0007669"/>
    <property type="project" value="UniProtKB-UniRule"/>
</dbReference>
<dbReference type="GO" id="GO:0071596">
    <property type="term" value="P:ubiquitin-dependent protein catabolic process via the N-end rule pathway"/>
    <property type="evidence" value="ECO:0007669"/>
    <property type="project" value="InterPro"/>
</dbReference>
<dbReference type="HAMAP" id="MF_00689">
    <property type="entry name" value="Bpt"/>
    <property type="match status" value="1"/>
</dbReference>
<dbReference type="InterPro" id="IPR016181">
    <property type="entry name" value="Acyl_CoA_acyltransferase"/>
</dbReference>
<dbReference type="InterPro" id="IPR017138">
    <property type="entry name" value="Asp_Glu_LeuTrfase"/>
</dbReference>
<dbReference type="InterPro" id="IPR030700">
    <property type="entry name" value="N-end_Aminoacyl_Trfase"/>
</dbReference>
<dbReference type="InterPro" id="IPR007472">
    <property type="entry name" value="N-end_Aminoacyl_Trfase_C"/>
</dbReference>
<dbReference type="InterPro" id="IPR007471">
    <property type="entry name" value="N-end_Aminoacyl_Trfase_N"/>
</dbReference>
<dbReference type="NCBIfam" id="NF002341">
    <property type="entry name" value="PRK01305.1-1"/>
    <property type="match status" value="1"/>
</dbReference>
<dbReference type="NCBIfam" id="NF002342">
    <property type="entry name" value="PRK01305.1-3"/>
    <property type="match status" value="1"/>
</dbReference>
<dbReference type="NCBIfam" id="NF002346">
    <property type="entry name" value="PRK01305.2-3"/>
    <property type="match status" value="1"/>
</dbReference>
<dbReference type="PANTHER" id="PTHR21367">
    <property type="entry name" value="ARGININE-TRNA-PROTEIN TRANSFERASE 1"/>
    <property type="match status" value="1"/>
</dbReference>
<dbReference type="PANTHER" id="PTHR21367:SF1">
    <property type="entry name" value="ARGINYL-TRNA--PROTEIN TRANSFERASE 1"/>
    <property type="match status" value="1"/>
</dbReference>
<dbReference type="Pfam" id="PF04377">
    <property type="entry name" value="ATE_C"/>
    <property type="match status" value="1"/>
</dbReference>
<dbReference type="Pfam" id="PF04376">
    <property type="entry name" value="ATE_N"/>
    <property type="match status" value="1"/>
</dbReference>
<dbReference type="PIRSF" id="PIRSF037208">
    <property type="entry name" value="ATE_pro_prd"/>
    <property type="match status" value="1"/>
</dbReference>
<dbReference type="SUPFAM" id="SSF55729">
    <property type="entry name" value="Acyl-CoA N-acyltransferases (Nat)"/>
    <property type="match status" value="1"/>
</dbReference>
<accession>A4G7T6</accession>
<comment type="function">
    <text evidence="1">Functions in the N-end rule pathway of protein degradation where it conjugates Leu from its aminoacyl-tRNA to the N-termini of proteins containing an N-terminal aspartate or glutamate.</text>
</comment>
<comment type="catalytic activity">
    <reaction evidence="1">
        <text>N-terminal L-glutamyl-[protein] + L-leucyl-tRNA(Leu) = N-terminal L-leucyl-L-glutamyl-[protein] + tRNA(Leu) + H(+)</text>
        <dbReference type="Rhea" id="RHEA:50412"/>
        <dbReference type="Rhea" id="RHEA-COMP:9613"/>
        <dbReference type="Rhea" id="RHEA-COMP:9622"/>
        <dbReference type="Rhea" id="RHEA-COMP:12664"/>
        <dbReference type="Rhea" id="RHEA-COMP:12668"/>
        <dbReference type="ChEBI" id="CHEBI:15378"/>
        <dbReference type="ChEBI" id="CHEBI:64721"/>
        <dbReference type="ChEBI" id="CHEBI:78442"/>
        <dbReference type="ChEBI" id="CHEBI:78494"/>
        <dbReference type="ChEBI" id="CHEBI:133041"/>
        <dbReference type="EC" id="2.3.2.29"/>
    </reaction>
</comment>
<comment type="catalytic activity">
    <reaction evidence="1">
        <text>N-terminal L-aspartyl-[protein] + L-leucyl-tRNA(Leu) = N-terminal L-leucyl-L-aspartyl-[protein] + tRNA(Leu) + H(+)</text>
        <dbReference type="Rhea" id="RHEA:50420"/>
        <dbReference type="Rhea" id="RHEA-COMP:9613"/>
        <dbReference type="Rhea" id="RHEA-COMP:9622"/>
        <dbReference type="Rhea" id="RHEA-COMP:12669"/>
        <dbReference type="Rhea" id="RHEA-COMP:12674"/>
        <dbReference type="ChEBI" id="CHEBI:15378"/>
        <dbReference type="ChEBI" id="CHEBI:64720"/>
        <dbReference type="ChEBI" id="CHEBI:78442"/>
        <dbReference type="ChEBI" id="CHEBI:78494"/>
        <dbReference type="ChEBI" id="CHEBI:133042"/>
        <dbReference type="EC" id="2.3.2.29"/>
    </reaction>
</comment>
<comment type="subcellular location">
    <subcellularLocation>
        <location evidence="1">Cytoplasm</location>
    </subcellularLocation>
</comment>
<comment type="similarity">
    <text evidence="1">Belongs to the R-transferase family. Bpt subfamily.</text>
</comment>
<protein>
    <recommendedName>
        <fullName evidence="1">Aspartate/glutamate leucyltransferase</fullName>
        <ecNumber evidence="1">2.3.2.29</ecNumber>
    </recommendedName>
</protein>
<gene>
    <name evidence="1" type="primary">bpt</name>
    <name type="ordered locus">HEAR2443</name>
</gene>